<sequence>MNQSYGRLVSRAAIAATAMASLLLLIKIFAWWYTGSVSILAALVDSLVDIGASLTNLLVVRYSLQPADDNHSFGHGKAESLAALAQSMFISGSALFLFLTGIQHLVSPTPMTDPGVGVIVTIVALICTIILVSFQRWVVRRTQSQAVRADMLHYQSDVMMNGAILLALGLSWYGWHRADALFALGIGIYILYSALRMGYEAVQSLLDRALPDEERQEIIDIVTSWPGVSGAHDLRTRQSGPTRFIQIHLEMEDSLPLVQAHMVADQVEQAILRRFPGSDVIIHQDPCSVVPREGKRSMLS</sequence>
<name>FIEF_ECO7I</name>
<gene>
    <name evidence="1" type="primary">fieF</name>
    <name type="ordered locus">ECIAI39_3081</name>
</gene>
<reference key="1">
    <citation type="journal article" date="2009" name="PLoS Genet.">
        <title>Organised genome dynamics in the Escherichia coli species results in highly diverse adaptive paths.</title>
        <authorList>
            <person name="Touchon M."/>
            <person name="Hoede C."/>
            <person name="Tenaillon O."/>
            <person name="Barbe V."/>
            <person name="Baeriswyl S."/>
            <person name="Bidet P."/>
            <person name="Bingen E."/>
            <person name="Bonacorsi S."/>
            <person name="Bouchier C."/>
            <person name="Bouvet O."/>
            <person name="Calteau A."/>
            <person name="Chiapello H."/>
            <person name="Clermont O."/>
            <person name="Cruveiller S."/>
            <person name="Danchin A."/>
            <person name="Diard M."/>
            <person name="Dossat C."/>
            <person name="Karoui M.E."/>
            <person name="Frapy E."/>
            <person name="Garry L."/>
            <person name="Ghigo J.M."/>
            <person name="Gilles A.M."/>
            <person name="Johnson J."/>
            <person name="Le Bouguenec C."/>
            <person name="Lescat M."/>
            <person name="Mangenot S."/>
            <person name="Martinez-Jehanne V."/>
            <person name="Matic I."/>
            <person name="Nassif X."/>
            <person name="Oztas S."/>
            <person name="Petit M.A."/>
            <person name="Pichon C."/>
            <person name="Rouy Z."/>
            <person name="Ruf C.S."/>
            <person name="Schneider D."/>
            <person name="Tourret J."/>
            <person name="Vacherie B."/>
            <person name="Vallenet D."/>
            <person name="Medigue C."/>
            <person name="Rocha E.P.C."/>
            <person name="Denamur E."/>
        </authorList>
    </citation>
    <scope>NUCLEOTIDE SEQUENCE [LARGE SCALE GENOMIC DNA]</scope>
    <source>
        <strain>IAI39 / ExPEC</strain>
    </source>
</reference>
<protein>
    <recommendedName>
        <fullName evidence="1">Cation-efflux pump FieF</fullName>
    </recommendedName>
</protein>
<comment type="function">
    <text evidence="1">Divalent metal cation transporter which exports Zn(2+), Cd(2+) and possibly Fe(2+). May be involved in zinc and iron detoxification by efflux.</text>
</comment>
<comment type="catalytic activity">
    <reaction evidence="1">
        <text>Zn(2+)(in) + H(+)(out) = Zn(2+)(out) + H(+)(in)</text>
        <dbReference type="Rhea" id="RHEA:28839"/>
        <dbReference type="ChEBI" id="CHEBI:15378"/>
        <dbReference type="ChEBI" id="CHEBI:29105"/>
    </reaction>
</comment>
<comment type="catalytic activity">
    <reaction evidence="1">
        <text>Cd(2+)(in) + H(+)(out) = Cd(2+)(out) + H(+)(in)</text>
        <dbReference type="Rhea" id="RHEA:28739"/>
        <dbReference type="ChEBI" id="CHEBI:15378"/>
        <dbReference type="ChEBI" id="CHEBI:48775"/>
    </reaction>
</comment>
<comment type="catalytic activity">
    <reaction evidence="1">
        <text>Fe(2+)(in) + H(+)(out) = Fe(2+)(out) + H(+)(in)</text>
        <dbReference type="Rhea" id="RHEA:29439"/>
        <dbReference type="ChEBI" id="CHEBI:15378"/>
        <dbReference type="ChEBI" id="CHEBI:29033"/>
    </reaction>
</comment>
<comment type="subunit">
    <text evidence="1">Homodimer.</text>
</comment>
<comment type="subcellular location">
    <subcellularLocation>
        <location evidence="1">Cell inner membrane</location>
        <topology evidence="1">Multi-pass membrane protein</topology>
    </subcellularLocation>
</comment>
<comment type="similarity">
    <text evidence="1">Belongs to the cation diffusion facilitator (CDF) transporter (TC 2.A.4) family. FieF subfamily.</text>
</comment>
<dbReference type="EMBL" id="CU928164">
    <property type="protein sequence ID" value="CAR19200.1"/>
    <property type="molecule type" value="Genomic_DNA"/>
</dbReference>
<dbReference type="RefSeq" id="WP_001076748.1">
    <property type="nucleotide sequence ID" value="NC_011750.1"/>
</dbReference>
<dbReference type="RefSeq" id="YP_002409011.1">
    <property type="nucleotide sequence ID" value="NC_011750.1"/>
</dbReference>
<dbReference type="SMR" id="B7NU92"/>
<dbReference type="STRING" id="585057.ECIAI39_3081"/>
<dbReference type="GeneID" id="93777983"/>
<dbReference type="KEGG" id="ect:ECIAI39_3081"/>
<dbReference type="PATRIC" id="fig|585057.6.peg.3194"/>
<dbReference type="HOGENOM" id="CLU_013430_3_0_6"/>
<dbReference type="Proteomes" id="UP000000749">
    <property type="component" value="Chromosome"/>
</dbReference>
<dbReference type="GO" id="GO:0005886">
    <property type="term" value="C:plasma membrane"/>
    <property type="evidence" value="ECO:0007669"/>
    <property type="project" value="UniProtKB-SubCell"/>
</dbReference>
<dbReference type="GO" id="GO:0015086">
    <property type="term" value="F:cadmium ion transmembrane transporter activity"/>
    <property type="evidence" value="ECO:0007669"/>
    <property type="project" value="UniProtKB-UniRule"/>
</dbReference>
<dbReference type="GO" id="GO:0015093">
    <property type="term" value="F:ferrous iron transmembrane transporter activity"/>
    <property type="evidence" value="ECO:0007669"/>
    <property type="project" value="TreeGrafter"/>
</dbReference>
<dbReference type="GO" id="GO:0046872">
    <property type="term" value="F:metal ion binding"/>
    <property type="evidence" value="ECO:0007669"/>
    <property type="project" value="UniProtKB-KW"/>
</dbReference>
<dbReference type="GO" id="GO:0015341">
    <property type="term" value="F:zinc efflux antiporter activity"/>
    <property type="evidence" value="ECO:0007669"/>
    <property type="project" value="TreeGrafter"/>
</dbReference>
<dbReference type="GO" id="GO:0006882">
    <property type="term" value="P:intracellular zinc ion homeostasis"/>
    <property type="evidence" value="ECO:0007669"/>
    <property type="project" value="TreeGrafter"/>
</dbReference>
<dbReference type="FunFam" id="1.20.1510.10:FF:000001">
    <property type="entry name" value="Ferrous-iron efflux pump FieF"/>
    <property type="match status" value="1"/>
</dbReference>
<dbReference type="FunFam" id="3.30.70.1350:FF:000002">
    <property type="entry name" value="Ferrous-iron efflux pump FieF"/>
    <property type="match status" value="1"/>
</dbReference>
<dbReference type="Gene3D" id="1.20.1510.10">
    <property type="entry name" value="Cation efflux protein transmembrane domain"/>
    <property type="match status" value="1"/>
</dbReference>
<dbReference type="Gene3D" id="3.30.70.1350">
    <property type="entry name" value="Cation efflux protein, cytoplasmic domain"/>
    <property type="match status" value="1"/>
</dbReference>
<dbReference type="HAMAP" id="MF_01425">
    <property type="entry name" value="Cation_efflux_FieF"/>
    <property type="match status" value="1"/>
</dbReference>
<dbReference type="InterPro" id="IPR002524">
    <property type="entry name" value="Cation_efflux"/>
</dbReference>
<dbReference type="InterPro" id="IPR027470">
    <property type="entry name" value="Cation_efflux_CTD"/>
</dbReference>
<dbReference type="InterPro" id="IPR036837">
    <property type="entry name" value="Cation_efflux_CTD_sf"/>
</dbReference>
<dbReference type="InterPro" id="IPR023783">
    <property type="entry name" value="Cation_efflux_FieF"/>
</dbReference>
<dbReference type="InterPro" id="IPR027469">
    <property type="entry name" value="Cation_efflux_TMD_sf"/>
</dbReference>
<dbReference type="InterPro" id="IPR050291">
    <property type="entry name" value="CDF_Transporter"/>
</dbReference>
<dbReference type="NCBIfam" id="TIGR01297">
    <property type="entry name" value="CDF"/>
    <property type="match status" value="1"/>
</dbReference>
<dbReference type="NCBIfam" id="NF007064">
    <property type="entry name" value="PRK09509.1"/>
    <property type="match status" value="1"/>
</dbReference>
<dbReference type="PANTHER" id="PTHR43840:SF41">
    <property type="entry name" value="CATION-EFFLUX PUMP FIEF"/>
    <property type="match status" value="1"/>
</dbReference>
<dbReference type="PANTHER" id="PTHR43840">
    <property type="entry name" value="MITOCHONDRIAL METAL TRANSPORTER 1-RELATED"/>
    <property type="match status" value="1"/>
</dbReference>
<dbReference type="Pfam" id="PF01545">
    <property type="entry name" value="Cation_efflux"/>
    <property type="match status" value="1"/>
</dbReference>
<dbReference type="Pfam" id="PF16916">
    <property type="entry name" value="ZT_dimer"/>
    <property type="match status" value="1"/>
</dbReference>
<dbReference type="SUPFAM" id="SSF160240">
    <property type="entry name" value="Cation efflux protein cytoplasmic domain-like"/>
    <property type="match status" value="1"/>
</dbReference>
<dbReference type="SUPFAM" id="SSF161111">
    <property type="entry name" value="Cation efflux protein transmembrane domain-like"/>
    <property type="match status" value="1"/>
</dbReference>
<keyword id="KW-0997">Cell inner membrane</keyword>
<keyword id="KW-1003">Cell membrane</keyword>
<keyword id="KW-0406">Ion transport</keyword>
<keyword id="KW-0408">Iron</keyword>
<keyword id="KW-0410">Iron transport</keyword>
<keyword id="KW-0472">Membrane</keyword>
<keyword id="KW-0479">Metal-binding</keyword>
<keyword id="KW-0812">Transmembrane</keyword>
<keyword id="KW-1133">Transmembrane helix</keyword>
<keyword id="KW-0813">Transport</keyword>
<keyword id="KW-0862">Zinc</keyword>
<keyword id="KW-0864">Zinc transport</keyword>
<organism>
    <name type="scientific">Escherichia coli O7:K1 (strain IAI39 / ExPEC)</name>
    <dbReference type="NCBI Taxonomy" id="585057"/>
    <lineage>
        <taxon>Bacteria</taxon>
        <taxon>Pseudomonadati</taxon>
        <taxon>Pseudomonadota</taxon>
        <taxon>Gammaproteobacteria</taxon>
        <taxon>Enterobacterales</taxon>
        <taxon>Enterobacteriaceae</taxon>
        <taxon>Escherichia</taxon>
    </lineage>
</organism>
<proteinExistence type="inferred from homology"/>
<accession>B7NU92</accession>
<feature type="chain" id="PRO_1000145691" description="Cation-efflux pump FieF">
    <location>
        <begin position="1"/>
        <end position="300"/>
    </location>
</feature>
<feature type="transmembrane region" description="Helical" evidence="1">
    <location>
        <begin position="12"/>
        <end position="32"/>
    </location>
</feature>
<feature type="transmembrane region" description="Helical" evidence="1">
    <location>
        <begin position="39"/>
        <end position="59"/>
    </location>
</feature>
<feature type="transmembrane region" description="Helical" evidence="1">
    <location>
        <begin position="82"/>
        <end position="102"/>
    </location>
</feature>
<feature type="transmembrane region" description="Helical" evidence="1">
    <location>
        <begin position="114"/>
        <end position="134"/>
    </location>
</feature>
<feature type="transmembrane region" description="Helical" evidence="1">
    <location>
        <begin position="156"/>
        <end position="176"/>
    </location>
</feature>
<feature type="transmembrane region" description="Helical" evidence="1">
    <location>
        <begin position="178"/>
        <end position="198"/>
    </location>
</feature>
<feature type="binding site" evidence="1">
    <location>
        <position position="45"/>
    </location>
    <ligand>
        <name>Zn(2+)</name>
        <dbReference type="ChEBI" id="CHEBI:29105"/>
    </ligand>
</feature>
<feature type="binding site" evidence="1">
    <location>
        <position position="49"/>
    </location>
    <ligand>
        <name>Zn(2+)</name>
        <dbReference type="ChEBI" id="CHEBI:29105"/>
    </ligand>
</feature>
<feature type="binding site" evidence="1">
    <location>
        <position position="153"/>
    </location>
    <ligand>
        <name>Zn(2+)</name>
        <dbReference type="ChEBI" id="CHEBI:29105"/>
    </ligand>
</feature>
<feature type="binding site" evidence="1">
    <location>
        <position position="157"/>
    </location>
    <ligand>
        <name>Zn(2+)</name>
        <dbReference type="ChEBI" id="CHEBI:29105"/>
    </ligand>
</feature>
<evidence type="ECO:0000255" key="1">
    <source>
        <dbReference type="HAMAP-Rule" id="MF_01425"/>
    </source>
</evidence>